<dbReference type="EMBL" id="CU467964">
    <property type="status" value="NOT_ANNOTATED_CDS"/>
    <property type="molecule type" value="Genomic_DNA"/>
</dbReference>
<dbReference type="EMBL" id="FP016176">
    <property type="status" value="NOT_ANNOTATED_CDS"/>
    <property type="molecule type" value="Genomic_DNA"/>
</dbReference>
<dbReference type="EMBL" id="FP565452">
    <property type="status" value="NOT_ANNOTATED_CDS"/>
    <property type="molecule type" value="Genomic_DNA"/>
</dbReference>
<dbReference type="EMBL" id="FP565456">
    <property type="status" value="NOT_ANNOTATED_CDS"/>
    <property type="molecule type" value="Genomic_DNA"/>
</dbReference>
<dbReference type="EMBL" id="FP565458">
    <property type="status" value="NOT_ANNOTATED_CDS"/>
    <property type="molecule type" value="Genomic_DNA"/>
</dbReference>
<dbReference type="RefSeq" id="NP_001410782.1">
    <property type="nucleotide sequence ID" value="NM_001423853.1"/>
</dbReference>
<dbReference type="RefSeq" id="XP_009295477.1">
    <property type="nucleotide sequence ID" value="XM_009297202.2"/>
</dbReference>
<dbReference type="SMR" id="A0A0R4IKU3"/>
<dbReference type="FunCoup" id="A0A0R4IKU3">
    <property type="interactions" value="595"/>
</dbReference>
<dbReference type="STRING" id="7955.ENSDARP00000134661"/>
<dbReference type="GlyCosmos" id="A0A0R4IKU3">
    <property type="glycosylation" value="4 sites, No reported glycans"/>
</dbReference>
<dbReference type="PaxDb" id="7955-ENSDARP00000108231"/>
<dbReference type="GeneID" id="100334698"/>
<dbReference type="eggNOG" id="KOG3649">
    <property type="taxonomic scope" value="Eukaryota"/>
</dbReference>
<dbReference type="HOGENOM" id="CLU_013883_0_0_1"/>
<dbReference type="InParanoid" id="A0A0R4IKU3"/>
<dbReference type="OrthoDB" id="5956770at2759"/>
<dbReference type="PRO" id="PR:A0A0R4IKU3"/>
<dbReference type="Proteomes" id="UP000000437">
    <property type="component" value="Chromosome 24"/>
</dbReference>
<dbReference type="GO" id="GO:0005886">
    <property type="term" value="C:plasma membrane"/>
    <property type="evidence" value="ECO:0000314"/>
    <property type="project" value="UniProtKB"/>
</dbReference>
<dbReference type="GO" id="GO:0098552">
    <property type="term" value="C:side of membrane"/>
    <property type="evidence" value="ECO:0007669"/>
    <property type="project" value="UniProtKB-KW"/>
</dbReference>
<dbReference type="GO" id="GO:1990909">
    <property type="term" value="C:Wnt signalosome"/>
    <property type="evidence" value="ECO:0000250"/>
    <property type="project" value="UniProtKB"/>
</dbReference>
<dbReference type="GO" id="GO:0015026">
    <property type="term" value="F:coreceptor activity"/>
    <property type="evidence" value="ECO:0000250"/>
    <property type="project" value="UniProtKB"/>
</dbReference>
<dbReference type="GO" id="GO:0004866">
    <property type="term" value="F:endopeptidase inhibitor activity"/>
    <property type="evidence" value="ECO:0000318"/>
    <property type="project" value="GO_Central"/>
</dbReference>
<dbReference type="GO" id="GO:0008191">
    <property type="term" value="F:metalloendopeptidase inhibitor activity"/>
    <property type="evidence" value="ECO:0000250"/>
    <property type="project" value="UniProtKB"/>
</dbReference>
<dbReference type="GO" id="GO:0004867">
    <property type="term" value="F:serine-type endopeptidase inhibitor activity"/>
    <property type="evidence" value="ECO:0007669"/>
    <property type="project" value="UniProtKB-KW"/>
</dbReference>
<dbReference type="GO" id="GO:0001955">
    <property type="term" value="P:blood vessel maturation"/>
    <property type="evidence" value="ECO:0000318"/>
    <property type="project" value="GO_Central"/>
</dbReference>
<dbReference type="GO" id="GO:0060070">
    <property type="term" value="P:canonical Wnt signaling pathway"/>
    <property type="evidence" value="ECO:0000250"/>
    <property type="project" value="UniProtKB"/>
</dbReference>
<dbReference type="GO" id="GO:1990791">
    <property type="term" value="P:dorsal root ganglion development"/>
    <property type="evidence" value="ECO:0000315"/>
    <property type="project" value="ZFIN"/>
</dbReference>
<dbReference type="GO" id="GO:0030198">
    <property type="term" value="P:extracellular matrix organization"/>
    <property type="evidence" value="ECO:0000318"/>
    <property type="project" value="GO_Central"/>
</dbReference>
<dbReference type="GO" id="GO:1904684">
    <property type="term" value="P:negative regulation of metalloendopeptidase activity"/>
    <property type="evidence" value="ECO:0000250"/>
    <property type="project" value="UniProtKB"/>
</dbReference>
<dbReference type="GO" id="GO:0045765">
    <property type="term" value="P:regulation of angiogenesis"/>
    <property type="evidence" value="ECO:0000250"/>
    <property type="project" value="UniProtKB"/>
</dbReference>
<dbReference type="GO" id="GO:0060828">
    <property type="term" value="P:regulation of canonical Wnt signaling pathway"/>
    <property type="evidence" value="ECO:0000315"/>
    <property type="project" value="ZFIN"/>
</dbReference>
<dbReference type="GO" id="GO:0051726">
    <property type="term" value="P:regulation of cell cycle"/>
    <property type="evidence" value="ECO:0000316"/>
    <property type="project" value="ZFIN"/>
</dbReference>
<dbReference type="GO" id="GO:0090049">
    <property type="term" value="P:regulation of cell migration involved in sprouting angiogenesis"/>
    <property type="evidence" value="ECO:0000315"/>
    <property type="project" value="ZFIN"/>
</dbReference>
<dbReference type="GO" id="GO:0090210">
    <property type="term" value="P:regulation of establishment of blood-brain barrier"/>
    <property type="evidence" value="ECO:0000250"/>
    <property type="project" value="UniProtKB"/>
</dbReference>
<dbReference type="GO" id="GO:0002040">
    <property type="term" value="P:sprouting angiogenesis"/>
    <property type="evidence" value="ECO:0000315"/>
    <property type="project" value="ZFIN"/>
</dbReference>
<dbReference type="GO" id="GO:0001944">
    <property type="term" value="P:vasculature development"/>
    <property type="evidence" value="ECO:0000315"/>
    <property type="project" value="ZFIN"/>
</dbReference>
<dbReference type="GO" id="GO:0016055">
    <property type="term" value="P:Wnt signaling pathway"/>
    <property type="evidence" value="ECO:0000315"/>
    <property type="project" value="ZFIN"/>
</dbReference>
<dbReference type="FunFam" id="3.30.60.30:FF:000011">
    <property type="entry name" value="reversion-inducing cysteine-rich protein with Kazal motifs isoform X1"/>
    <property type="match status" value="1"/>
</dbReference>
<dbReference type="Gene3D" id="3.30.60.30">
    <property type="match status" value="1"/>
</dbReference>
<dbReference type="InterPro" id="IPR056978">
    <property type="entry name" value="CC4_RECK"/>
</dbReference>
<dbReference type="InterPro" id="IPR056976">
    <property type="entry name" value="EGF1_RECK"/>
</dbReference>
<dbReference type="InterPro" id="IPR055134">
    <property type="entry name" value="EGF2_RECK_dom"/>
</dbReference>
<dbReference type="InterPro" id="IPR056977">
    <property type="entry name" value="FnI_RECK"/>
</dbReference>
<dbReference type="InterPro" id="IPR056979">
    <property type="entry name" value="FZ_RECK"/>
</dbReference>
<dbReference type="InterPro" id="IPR002350">
    <property type="entry name" value="Kazal_dom"/>
</dbReference>
<dbReference type="InterPro" id="IPR036058">
    <property type="entry name" value="Kazal_dom_sf"/>
</dbReference>
<dbReference type="InterPro" id="IPR039016">
    <property type="entry name" value="RECK"/>
</dbReference>
<dbReference type="InterPro" id="IPR055110">
    <property type="entry name" value="RECK-like_N"/>
</dbReference>
<dbReference type="PANTHER" id="PTHR13487:SF3">
    <property type="entry name" value="REVERSION-INDUCING CYSTEINE-RICH PROTEIN WITH KAZAL MOTIFS"/>
    <property type="match status" value="1"/>
</dbReference>
<dbReference type="PANTHER" id="PTHR13487">
    <property type="entry name" value="SERINE PROTEASE INHIBITOR"/>
    <property type="match status" value="1"/>
</dbReference>
<dbReference type="Pfam" id="PF23332">
    <property type="entry name" value="CC4_RECK"/>
    <property type="match status" value="2"/>
</dbReference>
<dbReference type="Pfam" id="PF25027">
    <property type="entry name" value="EGF1_RECK"/>
    <property type="match status" value="1"/>
</dbReference>
<dbReference type="Pfam" id="PF22955">
    <property type="entry name" value="EGF2_RECK"/>
    <property type="match status" value="1"/>
</dbReference>
<dbReference type="Pfam" id="PF25028">
    <property type="entry name" value="FnI_RECK"/>
    <property type="match status" value="1"/>
</dbReference>
<dbReference type="Pfam" id="PF23298">
    <property type="entry name" value="FZ_RECK"/>
    <property type="match status" value="1"/>
</dbReference>
<dbReference type="Pfam" id="PF07648">
    <property type="entry name" value="Kazal_2"/>
    <property type="match status" value="2"/>
</dbReference>
<dbReference type="Pfam" id="PF22961">
    <property type="entry name" value="RECK-like_N"/>
    <property type="match status" value="1"/>
</dbReference>
<dbReference type="SMART" id="SM00280">
    <property type="entry name" value="KAZAL"/>
    <property type="match status" value="3"/>
</dbReference>
<dbReference type="SUPFAM" id="SSF100895">
    <property type="entry name" value="Kazal-type serine protease inhibitors"/>
    <property type="match status" value="2"/>
</dbReference>
<dbReference type="PROSITE" id="PS00282">
    <property type="entry name" value="KAZAL_1"/>
    <property type="match status" value="1"/>
</dbReference>
<dbReference type="PROSITE" id="PS51465">
    <property type="entry name" value="KAZAL_2"/>
    <property type="match status" value="2"/>
</dbReference>
<name>RECK_DANRE</name>
<evidence type="ECO:0000250" key="1">
    <source>
        <dbReference type="UniProtKB" id="A0A1D5PUP4"/>
    </source>
</evidence>
<evidence type="ECO:0000250" key="2">
    <source>
        <dbReference type="UniProtKB" id="O95980"/>
    </source>
</evidence>
<evidence type="ECO:0000255" key="3"/>
<evidence type="ECO:0000255" key="4">
    <source>
        <dbReference type="PROSITE-ProRule" id="PRU00498"/>
    </source>
</evidence>
<evidence type="ECO:0000255" key="5">
    <source>
        <dbReference type="PROSITE-ProRule" id="PRU00798"/>
    </source>
</evidence>
<evidence type="ECO:0000269" key="6">
    <source>
    </source>
</evidence>
<evidence type="ECO:0000269" key="7">
    <source>
    </source>
</evidence>
<evidence type="ECO:0000269" key="8">
    <source>
    </source>
</evidence>
<evidence type="ECO:0000303" key="9">
    <source>
    </source>
</evidence>
<evidence type="ECO:0000305" key="10"/>
<organism>
    <name type="scientific">Danio rerio</name>
    <name type="common">Zebrafish</name>
    <name type="synonym">Brachydanio rerio</name>
    <dbReference type="NCBI Taxonomy" id="7955"/>
    <lineage>
        <taxon>Eukaryota</taxon>
        <taxon>Metazoa</taxon>
        <taxon>Chordata</taxon>
        <taxon>Craniata</taxon>
        <taxon>Vertebrata</taxon>
        <taxon>Euteleostomi</taxon>
        <taxon>Actinopterygii</taxon>
        <taxon>Neopterygii</taxon>
        <taxon>Teleostei</taxon>
        <taxon>Ostariophysi</taxon>
        <taxon>Cypriniformes</taxon>
        <taxon>Danionidae</taxon>
        <taxon>Danioninae</taxon>
        <taxon>Danio</taxon>
    </lineage>
</organism>
<gene>
    <name evidence="9" type="primary">reck</name>
</gene>
<accession>A0A0R4IKU3</accession>
<accession>A0A2R8QDM9</accession>
<accession>F1QWT7</accession>
<proteinExistence type="evidence at protein level"/>
<comment type="function">
    <text evidence="2 6 7">Functions together with adgra2 to enable brain endothelial cells to selectively respond to Wnt7 signals (wnt7a or wnt7b) (PubMed:26051822, PubMed:26657775). Plays a key role in Wnt7-specific responses: required for central nervous system (CNS) angiogenesis and blood-brain barrier regulation (PubMed:26051822, PubMed:26657775). Acts as a Wnt7-specific coactivator of canonical Wnt signaling by decoding Wnt ligands: acts by interacting specifically with the disordered linker region of Wnt7, thereby conferring ligand selectivity for Wnt7. Adgra2 is then required to deliver reck-bound Wnt7 to frizzled by assembling a higher-order RECK-ADGRA2-Fzd-LRP5-LRP6 complex. Also acts as a serine protease inhibitor (By similarity).</text>
</comment>
<comment type="subunit">
    <text evidence="2 6">Interacts (via knot repeats) with wnt7a (via disordered linker region); the interaction is direct (By similarity). Interacts (via knot repeats) with wnt7b (via disordered linker region); the interaction is direct (By similarity). Interacts with adgra2; the interaction is direct (PubMed:26051822).</text>
</comment>
<comment type="subcellular location">
    <subcellularLocation>
        <location evidence="6 8">Cell membrane</location>
        <topology evidence="1">Lipid-anchor</topology>
        <topology evidence="1">GPI-anchor</topology>
    </subcellularLocation>
    <text evidence="6">Colocalizes with adgra2 at the plasma membrane.</text>
</comment>
<comment type="tissue specificity">
    <text evidence="7">Expressed in the cerebral endothelium.</text>
</comment>
<comment type="domain">
    <text evidence="2">The Kazal-like domains mediate the serine protease inhibitor activity.</text>
</comment>
<comment type="similarity">
    <text evidence="10">Belongs to the RECK family.</text>
</comment>
<reference key="1">
    <citation type="journal article" date="2013" name="Nature">
        <title>The zebrafish reference genome sequence and its relationship to the human genome.</title>
        <authorList>
            <person name="Howe K."/>
            <person name="Clark M.D."/>
            <person name="Torroja C.F."/>
            <person name="Torrance J."/>
            <person name="Berthelot C."/>
            <person name="Muffato M."/>
            <person name="Collins J.E."/>
            <person name="Humphray S."/>
            <person name="McLaren K."/>
            <person name="Matthews L."/>
            <person name="McLaren S."/>
            <person name="Sealy I."/>
            <person name="Caccamo M."/>
            <person name="Churcher C."/>
            <person name="Scott C."/>
            <person name="Barrett J.C."/>
            <person name="Koch R."/>
            <person name="Rauch G.J."/>
            <person name="White S."/>
            <person name="Chow W."/>
            <person name="Kilian B."/>
            <person name="Quintais L.T."/>
            <person name="Guerra-Assuncao J.A."/>
            <person name="Zhou Y."/>
            <person name="Gu Y."/>
            <person name="Yen J."/>
            <person name="Vogel J.H."/>
            <person name="Eyre T."/>
            <person name="Redmond S."/>
            <person name="Banerjee R."/>
            <person name="Chi J."/>
            <person name="Fu B."/>
            <person name="Langley E."/>
            <person name="Maguire S.F."/>
            <person name="Laird G.K."/>
            <person name="Lloyd D."/>
            <person name="Kenyon E."/>
            <person name="Donaldson S."/>
            <person name="Sehra H."/>
            <person name="Almeida-King J."/>
            <person name="Loveland J."/>
            <person name="Trevanion S."/>
            <person name="Jones M."/>
            <person name="Quail M."/>
            <person name="Willey D."/>
            <person name="Hunt A."/>
            <person name="Burton J."/>
            <person name="Sims S."/>
            <person name="McLay K."/>
            <person name="Plumb B."/>
            <person name="Davis J."/>
            <person name="Clee C."/>
            <person name="Oliver K."/>
            <person name="Clark R."/>
            <person name="Riddle C."/>
            <person name="Elliot D."/>
            <person name="Threadgold G."/>
            <person name="Harden G."/>
            <person name="Ware D."/>
            <person name="Begum S."/>
            <person name="Mortimore B."/>
            <person name="Kerry G."/>
            <person name="Heath P."/>
            <person name="Phillimore B."/>
            <person name="Tracey A."/>
            <person name="Corby N."/>
            <person name="Dunn M."/>
            <person name="Johnson C."/>
            <person name="Wood J."/>
            <person name="Clark S."/>
            <person name="Pelan S."/>
            <person name="Griffiths G."/>
            <person name="Smith M."/>
            <person name="Glithero R."/>
            <person name="Howden P."/>
            <person name="Barker N."/>
            <person name="Lloyd C."/>
            <person name="Stevens C."/>
            <person name="Harley J."/>
            <person name="Holt K."/>
            <person name="Panagiotidis G."/>
            <person name="Lovell J."/>
            <person name="Beasley H."/>
            <person name="Henderson C."/>
            <person name="Gordon D."/>
            <person name="Auger K."/>
            <person name="Wright D."/>
            <person name="Collins J."/>
            <person name="Raisen C."/>
            <person name="Dyer L."/>
            <person name="Leung K."/>
            <person name="Robertson L."/>
            <person name="Ambridge K."/>
            <person name="Leongamornlert D."/>
            <person name="McGuire S."/>
            <person name="Gilderthorp R."/>
            <person name="Griffiths C."/>
            <person name="Manthravadi D."/>
            <person name="Nichol S."/>
            <person name="Barker G."/>
            <person name="Whitehead S."/>
            <person name="Kay M."/>
            <person name="Brown J."/>
            <person name="Murnane C."/>
            <person name="Gray E."/>
            <person name="Humphries M."/>
            <person name="Sycamore N."/>
            <person name="Barker D."/>
            <person name="Saunders D."/>
            <person name="Wallis J."/>
            <person name="Babbage A."/>
            <person name="Hammond S."/>
            <person name="Mashreghi-Mohammadi M."/>
            <person name="Barr L."/>
            <person name="Martin S."/>
            <person name="Wray P."/>
            <person name="Ellington A."/>
            <person name="Matthews N."/>
            <person name="Ellwood M."/>
            <person name="Woodmansey R."/>
            <person name="Clark G."/>
            <person name="Cooper J."/>
            <person name="Tromans A."/>
            <person name="Grafham D."/>
            <person name="Skuce C."/>
            <person name="Pandian R."/>
            <person name="Andrews R."/>
            <person name="Harrison E."/>
            <person name="Kimberley A."/>
            <person name="Garnett J."/>
            <person name="Fosker N."/>
            <person name="Hall R."/>
            <person name="Garner P."/>
            <person name="Kelly D."/>
            <person name="Bird C."/>
            <person name="Palmer S."/>
            <person name="Gehring I."/>
            <person name="Berger A."/>
            <person name="Dooley C.M."/>
            <person name="Ersan-Urun Z."/>
            <person name="Eser C."/>
            <person name="Geiger H."/>
            <person name="Geisler M."/>
            <person name="Karotki L."/>
            <person name="Kirn A."/>
            <person name="Konantz J."/>
            <person name="Konantz M."/>
            <person name="Oberlander M."/>
            <person name="Rudolph-Geiger S."/>
            <person name="Teucke M."/>
            <person name="Lanz C."/>
            <person name="Raddatz G."/>
            <person name="Osoegawa K."/>
            <person name="Zhu B."/>
            <person name="Rapp A."/>
            <person name="Widaa S."/>
            <person name="Langford C."/>
            <person name="Yang F."/>
            <person name="Schuster S.C."/>
            <person name="Carter N.P."/>
            <person name="Harrow J."/>
            <person name="Ning Z."/>
            <person name="Herrero J."/>
            <person name="Searle S.M."/>
            <person name="Enright A."/>
            <person name="Geisler R."/>
            <person name="Plasterk R.H."/>
            <person name="Lee C."/>
            <person name="Westerfield M."/>
            <person name="de Jong P.J."/>
            <person name="Zon L.I."/>
            <person name="Postlethwait J.H."/>
            <person name="Nusslein-Volhard C."/>
            <person name="Hubbard T.J."/>
            <person name="Roest Crollius H."/>
            <person name="Rogers J."/>
            <person name="Stemple D.L."/>
        </authorList>
    </citation>
    <scope>NUCLEOTIDE SEQUENCE [LARGE SCALE GENOMIC DNA]</scope>
    <source>
        <strain>Tuebingen</strain>
    </source>
</reference>
<reference key="2">
    <citation type="journal article" date="2015" name="Elife">
        <title>Tip cell-specific requirement for an atypical Gpr124- and Reck-dependent Wnt/beta-catenin pathway during brain angiogenesis.</title>
        <authorList>
            <person name="Vanhollebeke B."/>
            <person name="Stone O.A."/>
            <person name="Bostaille N."/>
            <person name="Cho C."/>
            <person name="Zhou Y."/>
            <person name="Maquet E."/>
            <person name="Gauquier A."/>
            <person name="Cabochette P."/>
            <person name="Fukuhara S."/>
            <person name="Mochizuki N."/>
            <person name="Nathans J."/>
            <person name="Stainier D.Y."/>
        </authorList>
    </citation>
    <scope>FUNCTION</scope>
    <scope>SUBCELLULAR LOCATION</scope>
    <scope>INTERACTION WITH ADGRA2</scope>
</reference>
<reference key="3">
    <citation type="journal article" date="2016" name="Biol. Open">
        <title>Molecular insights into Adgra2/Gpr124 and Reck intracellular trafficking.</title>
        <authorList>
            <person name="Bostaille N."/>
            <person name="Gauquier A."/>
            <person name="Twyffels L."/>
            <person name="Vanhollebeke B."/>
        </authorList>
    </citation>
    <scope>SUBCELLULAR LOCATION</scope>
</reference>
<reference key="4">
    <citation type="journal article" date="2016" name="Development">
        <title>Reck enables cerebrovascular development by promoting canonical Wnt signaling.</title>
        <authorList>
            <person name="Ulrich F."/>
            <person name="Carretero-Ortega J."/>
            <person name="Menendez J."/>
            <person name="Narvaez C."/>
            <person name="Sun B."/>
            <person name="Lancaster E."/>
            <person name="Pershad V."/>
            <person name="Trzaska S."/>
            <person name="Veliz E."/>
            <person name="Kamei M."/>
            <person name="Prendergast A."/>
            <person name="Kidd K.R."/>
            <person name="Shaw K.M."/>
            <person name="Castranova D.A."/>
            <person name="Pham V.N."/>
            <person name="Lo B.D."/>
            <person name="Martin B.L."/>
            <person name="Raible D.W."/>
            <person name="Weinstein B.M."/>
            <person name="Torres-Vazquez J."/>
        </authorList>
    </citation>
    <scope>FUNCTION</scope>
    <scope>TISSUE SPECIFICITY</scope>
    <scope>MUTAGENESIS OF CYS-254</scope>
</reference>
<protein>
    <recommendedName>
        <fullName evidence="9">Reversion-inducing cysteine-rich protein with Kazal motifs</fullName>
    </recommendedName>
</protein>
<feature type="signal peptide" evidence="3">
    <location>
        <begin position="1"/>
        <end position="22"/>
    </location>
</feature>
<feature type="chain" id="PRO_5015302792" description="Reversion-inducing cysteine-rich protein with Kazal motifs" evidence="3">
    <location>
        <begin position="23"/>
        <end position="931"/>
    </location>
</feature>
<feature type="propeptide" id="PRO_0000445620" evidence="3">
    <location>
        <begin position="932"/>
        <end position="955"/>
    </location>
</feature>
<feature type="repeat" description="Knot 1" evidence="2">
    <location>
        <begin position="28"/>
        <end position="75"/>
    </location>
</feature>
<feature type="repeat" description="Knot 2" evidence="2">
    <location>
        <begin position="95"/>
        <end position="132"/>
    </location>
</feature>
<feature type="repeat" description="Knot 3" evidence="2">
    <location>
        <begin position="142"/>
        <end position="188"/>
    </location>
</feature>
<feature type="repeat" description="Knot 4" evidence="2">
    <location>
        <begin position="207"/>
        <end position="254"/>
    </location>
</feature>
<feature type="repeat" description="Knot 5" evidence="2">
    <location>
        <begin position="282"/>
        <end position="326"/>
    </location>
</feature>
<feature type="domain" description="Kazal-like 1" evidence="5">
    <location>
        <begin position="615"/>
        <end position="661"/>
    </location>
</feature>
<feature type="domain" description="Kazal-like 2" evidence="5">
    <location>
        <begin position="686"/>
        <end position="741"/>
    </location>
</feature>
<feature type="domain" description="Kazal-like 3" evidence="5">
    <location>
        <begin position="742"/>
        <end position="778"/>
    </location>
</feature>
<feature type="region of interest" description="5 X Knot repeats" evidence="2">
    <location>
        <begin position="28"/>
        <end position="326"/>
    </location>
</feature>
<feature type="site" description="Reactive bond" evidence="5">
    <location>
        <begin position="625"/>
        <end position="626"/>
    </location>
</feature>
<feature type="site" description="Reactive bond" evidence="5">
    <location>
        <begin position="706"/>
        <end position="707"/>
    </location>
</feature>
<feature type="lipid moiety-binding region" description="GPI-anchor amidated serine" evidence="3">
    <location>
        <position position="931"/>
    </location>
</feature>
<feature type="glycosylation site" description="N-linked (GlcNAc...) asparagine" evidence="4">
    <location>
        <position position="77"/>
    </location>
</feature>
<feature type="glycosylation site" description="N-linked (GlcNAc...) asparagine" evidence="4">
    <location>
        <position position="191"/>
    </location>
</feature>
<feature type="glycosylation site" description="N-linked (GlcNAc...) asparagine" evidence="4">
    <location>
        <position position="287"/>
    </location>
</feature>
<feature type="glycosylation site" description="N-linked (GlcNAc...) asparagine" evidence="4">
    <location>
        <position position="375"/>
    </location>
</feature>
<feature type="disulfide bond" evidence="5">
    <location>
        <begin position="621"/>
        <end position="646"/>
    </location>
</feature>
<feature type="disulfide bond" evidence="5">
    <location>
        <begin position="623"/>
        <end position="642"/>
    </location>
</feature>
<feature type="disulfide bond" evidence="5">
    <location>
        <begin position="631"/>
        <end position="659"/>
    </location>
</feature>
<feature type="disulfide bond" evidence="5">
    <location>
        <begin position="704"/>
        <end position="724"/>
    </location>
</feature>
<feature type="disulfide bond" evidence="5">
    <location>
        <begin position="713"/>
        <end position="739"/>
    </location>
</feature>
<feature type="mutagenesis site" description="In no food for thought mutant (nft); lethality caused by the absence of most of the intracerebral central arteries. Defects are caused by impaired Wnt signaling." evidence="7">
    <original>C</original>
    <variation>Y</variation>
    <location>
        <position position="254"/>
    </location>
</feature>
<sequence length="955" mass="105521">MSGCLQILTVLLCCRFWALVFSQDQSCCVHHAADIPRCRDACEQLASIRSESRLRHLLHRLPSYCPETLSELWICINNSLPGASRKSDGWVGLGCCELAISAECRRDCKQASSKNDISKVCKKDTENPLYSCITKNEMGSVCCSYAGRHTTCREYCQAIFRTDSSPTVSQISAVKEYCQSVSPPLILCVENYTRLHPTHRPIDSLHCCDRAEEAHCQLACKRILRTLSTEQEIMDGLISECGSQPLPQDPLWQCFLGSAHPPANTDPESPPIAKMDSAKLHCCFKANTSICRNMCVEISTSWGTQSWQEFDQHCEYNPVEMDLITCLADVREPCQLGCKELSYCTNFNNRPTELFRSCNVQSDQGALNDFKLWSNGSIRMPLMNIPVLDIRRCRPEMWKTVACALQIKPCYSRSRGSVICRSDCVEILRQCGDRRRFAEAQTPERICDLLSPTDDPERCIPLNRYLTASELESSVEEVIHPCNPNPCPSSHLCHVNRKGCHVGHDCLPYYCVPGCKLGEASEFLVPADARLQVPVHSAQPGCYEVCVCGQSGRLENCAEMPCFDTSKSCQIAGQRRSHGSSFRVDCNPCSCFAGDAVCSSRQCVRSDSSEEDRRLFTGLPCGCADHFVPVCAGNGRTYPSACVARCVGFTDSQFVFGSCRSFDPCSPNPCQRNQRCVPRRQVCLTDLSEFPCPQYECVSRPSSCDQKLLDPVCDTDNMEHANLCVLNLRGKTLAYSGHCQDACRRPREVCAHNGESYSTVCEAFSERVAVDYQGRCHAVGLESEFGSDSGCNAVPCPPLASDACQPVTPPGACCPVCAGMLRILWNKAQMNIFAKLNRDQPVSLHDILKILRLHVSVPQCDIFGYLSINSEIIILIAPVDQQPTPLQIEACSKEAEKIDSLINSGSPTLVSHVPLSAFLSSELQLSSVRSSSCVSISVCVLLLLCSLILTLTSDL</sequence>
<keyword id="KW-1003">Cell membrane</keyword>
<keyword id="KW-1015">Disulfide bond</keyword>
<keyword id="KW-0325">Glycoprotein</keyword>
<keyword id="KW-0336">GPI-anchor</keyword>
<keyword id="KW-0449">Lipoprotein</keyword>
<keyword id="KW-0472">Membrane</keyword>
<keyword id="KW-0646">Protease inhibitor</keyword>
<keyword id="KW-1185">Reference proteome</keyword>
<keyword id="KW-0677">Repeat</keyword>
<keyword id="KW-0722">Serine protease inhibitor</keyword>
<keyword id="KW-0732">Signal</keyword>
<keyword id="KW-0879">Wnt signaling pathway</keyword>